<organism>
    <name type="scientific">Escherichia coli (strain K12)</name>
    <dbReference type="NCBI Taxonomy" id="83333"/>
    <lineage>
        <taxon>Bacteria</taxon>
        <taxon>Pseudomonadati</taxon>
        <taxon>Pseudomonadota</taxon>
        <taxon>Gammaproteobacteria</taxon>
        <taxon>Enterobacterales</taxon>
        <taxon>Enterobacteriaceae</taxon>
        <taxon>Escherichia</taxon>
    </lineage>
</organism>
<comment type="subcellular location">
    <subcellularLocation>
        <location evidence="2">Cell membrane</location>
        <topology evidence="2">Lipid-anchor</topology>
    </subcellularLocation>
</comment>
<sequence length="99" mass="11336">MMMNAFFPAMALMVLVGCSIPSPVQKAQRVKVDPLRSLNMEALCKDQAAKRYNTGEQKIDVTAFEQFQGSYEMRGYTFRKEQFVCSFDADGHFLHLSMR</sequence>
<dbReference type="EMBL" id="U00096">
    <property type="protein sequence ID" value="ABD18703.1"/>
    <property type="molecule type" value="Genomic_DNA"/>
</dbReference>
<dbReference type="EMBL" id="AP009048">
    <property type="protein sequence ID" value="BAE77733.1"/>
    <property type="molecule type" value="Genomic_DNA"/>
</dbReference>
<dbReference type="RefSeq" id="WP_000980107.1">
    <property type="nucleotide sequence ID" value="NZ_SSZK01000041.1"/>
</dbReference>
<dbReference type="RefSeq" id="YP_588469.1">
    <property type="nucleotide sequence ID" value="NC_000913.3"/>
</dbReference>
<dbReference type="BioGRID" id="4259718">
    <property type="interactions" value="56"/>
</dbReference>
<dbReference type="FunCoup" id="Q2M7M3">
    <property type="interactions" value="10"/>
</dbReference>
<dbReference type="IntAct" id="Q2M7M3">
    <property type="interactions" value="1"/>
</dbReference>
<dbReference type="STRING" id="511145.b4553"/>
<dbReference type="PaxDb" id="511145-b4553"/>
<dbReference type="EnsemblBacteria" id="ABD18703">
    <property type="protein sequence ID" value="ABD18703"/>
    <property type="gene ID" value="b4553"/>
</dbReference>
<dbReference type="GeneID" id="1450292"/>
<dbReference type="KEGG" id="ecj:JW3532"/>
<dbReference type="KEGG" id="eco:b4553"/>
<dbReference type="KEGG" id="ecoc:C3026_19305"/>
<dbReference type="PATRIC" id="fig|511145.12.peg.3675"/>
<dbReference type="eggNOG" id="ENOG5032T4W">
    <property type="taxonomic scope" value="Bacteria"/>
</dbReference>
<dbReference type="HOGENOM" id="CLU_162515_0_0_6"/>
<dbReference type="InParanoid" id="Q2M7M3"/>
<dbReference type="OMA" id="FICSFDP"/>
<dbReference type="OrthoDB" id="6563049at2"/>
<dbReference type="PhylomeDB" id="Q2M7M3"/>
<dbReference type="BioCyc" id="EcoCyc:MONOMER0-2689"/>
<dbReference type="PRO" id="PR:Q2M7M3"/>
<dbReference type="Proteomes" id="UP000000625">
    <property type="component" value="Chromosome"/>
</dbReference>
<dbReference type="GO" id="GO:0005886">
    <property type="term" value="C:plasma membrane"/>
    <property type="evidence" value="ECO:0007669"/>
    <property type="project" value="UniProtKB-SubCell"/>
</dbReference>
<dbReference type="InterPro" id="IPR025728">
    <property type="entry name" value="YsaB-like"/>
</dbReference>
<dbReference type="Pfam" id="PF13983">
    <property type="entry name" value="YsaB"/>
    <property type="match status" value="1"/>
</dbReference>
<keyword id="KW-1003">Cell membrane</keyword>
<keyword id="KW-0449">Lipoprotein</keyword>
<keyword id="KW-0472">Membrane</keyword>
<keyword id="KW-0564">Palmitate</keyword>
<keyword id="KW-1185">Reference proteome</keyword>
<keyword id="KW-0732">Signal</keyword>
<evidence type="ECO:0000255" key="1"/>
<evidence type="ECO:0000305" key="2"/>
<reference key="1">
    <citation type="journal article" date="1997" name="Science">
        <title>The complete genome sequence of Escherichia coli K-12.</title>
        <authorList>
            <person name="Blattner F.R."/>
            <person name="Plunkett G. III"/>
            <person name="Bloch C.A."/>
            <person name="Perna N.T."/>
            <person name="Burland V."/>
            <person name="Riley M."/>
            <person name="Collado-Vides J."/>
            <person name="Glasner J.D."/>
            <person name="Rode C.K."/>
            <person name="Mayhew G.F."/>
            <person name="Gregor J."/>
            <person name="Davis N.W."/>
            <person name="Kirkpatrick H.A."/>
            <person name="Goeden M.A."/>
            <person name="Rose D.J."/>
            <person name="Mau B."/>
            <person name="Shao Y."/>
        </authorList>
    </citation>
    <scope>NUCLEOTIDE SEQUENCE [LARGE SCALE GENOMIC DNA]</scope>
    <source>
        <strain>K12 / MG1655 / ATCC 47076</strain>
    </source>
</reference>
<reference key="2">
    <citation type="journal article" date="2006" name="Mol. Syst. Biol.">
        <title>Highly accurate genome sequences of Escherichia coli K-12 strains MG1655 and W3110.</title>
        <authorList>
            <person name="Hayashi K."/>
            <person name="Morooka N."/>
            <person name="Yamamoto Y."/>
            <person name="Fujita K."/>
            <person name="Isono K."/>
            <person name="Choi S."/>
            <person name="Ohtsubo E."/>
            <person name="Baba T."/>
            <person name="Wanner B.L."/>
            <person name="Mori H."/>
            <person name="Horiuchi T."/>
        </authorList>
    </citation>
    <scope>NUCLEOTIDE SEQUENCE [LARGE SCALE GENOMIC DNA]</scope>
    <source>
        <strain>K12 / W3110 / ATCC 27325 / DSM 5911</strain>
    </source>
</reference>
<gene>
    <name type="primary">ysaB</name>
    <name type="ordered locus">b4553</name>
    <name type="ordered locus">JW3532</name>
</gene>
<accession>Q2M7M3</accession>
<accession>Q2EET6</accession>
<proteinExistence type="inferred from homology"/>
<protein>
    <recommendedName>
        <fullName>Uncharacterized lipoprotein YsaB</fullName>
    </recommendedName>
</protein>
<feature type="signal peptide" evidence="1">
    <location>
        <begin position="1"/>
        <end position="17"/>
    </location>
</feature>
<feature type="chain" id="PRO_0000268608" description="Uncharacterized lipoprotein YsaB">
    <location>
        <begin position="18"/>
        <end position="99"/>
    </location>
</feature>
<feature type="lipid moiety-binding region" description="N-palmitoyl cysteine" evidence="1">
    <location>
        <position position="18"/>
    </location>
</feature>
<feature type="lipid moiety-binding region" description="S-diacylglycerol cysteine" evidence="1">
    <location>
        <position position="18"/>
    </location>
</feature>
<name>YSAB_ECOLI</name>